<organism>
    <name type="scientific">Homo sapiens</name>
    <name type="common">Human</name>
    <dbReference type="NCBI Taxonomy" id="9606"/>
    <lineage>
        <taxon>Eukaryota</taxon>
        <taxon>Metazoa</taxon>
        <taxon>Chordata</taxon>
        <taxon>Craniata</taxon>
        <taxon>Vertebrata</taxon>
        <taxon>Euteleostomi</taxon>
        <taxon>Mammalia</taxon>
        <taxon>Eutheria</taxon>
        <taxon>Euarchontoglires</taxon>
        <taxon>Primates</taxon>
        <taxon>Haplorrhini</taxon>
        <taxon>Catarrhini</taxon>
        <taxon>Hominidae</taxon>
        <taxon>Homo</taxon>
    </lineage>
</organism>
<reference key="1">
    <citation type="journal article" date="2004" name="Nature">
        <title>The DNA sequence and comparative analysis of human chromosome 5.</title>
        <authorList>
            <person name="Schmutz J."/>
            <person name="Martin J."/>
            <person name="Terry A."/>
            <person name="Couronne O."/>
            <person name="Grimwood J."/>
            <person name="Lowry S."/>
            <person name="Gordon L.A."/>
            <person name="Scott D."/>
            <person name="Xie G."/>
            <person name="Huang W."/>
            <person name="Hellsten U."/>
            <person name="Tran-Gyamfi M."/>
            <person name="She X."/>
            <person name="Prabhakar S."/>
            <person name="Aerts A."/>
            <person name="Altherr M."/>
            <person name="Bajorek E."/>
            <person name="Black S."/>
            <person name="Branscomb E."/>
            <person name="Caoile C."/>
            <person name="Challacombe J.F."/>
            <person name="Chan Y.M."/>
            <person name="Denys M."/>
            <person name="Detter J.C."/>
            <person name="Escobar J."/>
            <person name="Flowers D."/>
            <person name="Fotopulos D."/>
            <person name="Glavina T."/>
            <person name="Gomez M."/>
            <person name="Gonzales E."/>
            <person name="Goodstein D."/>
            <person name="Grigoriev I."/>
            <person name="Groza M."/>
            <person name="Hammon N."/>
            <person name="Hawkins T."/>
            <person name="Haydu L."/>
            <person name="Israni S."/>
            <person name="Jett J."/>
            <person name="Kadner K."/>
            <person name="Kimball H."/>
            <person name="Kobayashi A."/>
            <person name="Lopez F."/>
            <person name="Lou Y."/>
            <person name="Martinez D."/>
            <person name="Medina C."/>
            <person name="Morgan J."/>
            <person name="Nandkeshwar R."/>
            <person name="Noonan J.P."/>
            <person name="Pitluck S."/>
            <person name="Pollard M."/>
            <person name="Predki P."/>
            <person name="Priest J."/>
            <person name="Ramirez L."/>
            <person name="Retterer J."/>
            <person name="Rodriguez A."/>
            <person name="Rogers S."/>
            <person name="Salamov A."/>
            <person name="Salazar A."/>
            <person name="Thayer N."/>
            <person name="Tice H."/>
            <person name="Tsai M."/>
            <person name="Ustaszewska A."/>
            <person name="Vo N."/>
            <person name="Wheeler J."/>
            <person name="Wu K."/>
            <person name="Yang J."/>
            <person name="Dickson M."/>
            <person name="Cheng J.-F."/>
            <person name="Eichler E.E."/>
            <person name="Olsen A."/>
            <person name="Pennacchio L.A."/>
            <person name="Rokhsar D.S."/>
            <person name="Richardson P."/>
            <person name="Lucas S.M."/>
            <person name="Myers R.M."/>
            <person name="Rubin E.M."/>
        </authorList>
    </citation>
    <scope>NUCLEOTIDE SEQUENCE [LARGE SCALE GENOMIC DNA]</scope>
</reference>
<reference key="2">
    <citation type="journal article" date="2010" name="BMC Genomics">
        <title>Expression, tandem repeat copy number variation and stability of four macrosatellite arrays in the human genome.</title>
        <authorList>
            <person name="Tremblay D.C."/>
            <person name="Alexander G. Jr."/>
            <person name="Moseley S."/>
            <person name="Chadwick B.P."/>
        </authorList>
    </citation>
    <scope>TISSUE SPECIFICITY</scope>
</reference>
<dbReference type="EMBL" id="AC233724">
    <property type="status" value="NOT_ANNOTATED_CDS"/>
    <property type="molecule type" value="Genomic_DNA"/>
</dbReference>
<dbReference type="CCDS" id="CCDS93699.1"/>
<dbReference type="RefSeq" id="NP_001388624.1">
    <property type="nucleotide sequence ID" value="NM_001401695.1"/>
</dbReference>
<dbReference type="SMR" id="A0A1W2PPH5"/>
<dbReference type="FunCoup" id="A0A1W2PPH5">
    <property type="interactions" value="25"/>
</dbReference>
<dbReference type="STRING" id="9606.ENSP00000491332"/>
<dbReference type="BioMuta" id="ENSG00000283776"/>
<dbReference type="MassIVE" id="A0A1W2PPH5"/>
<dbReference type="PeptideAtlas" id="A0A1W2PPH5"/>
<dbReference type="Ensembl" id="ENST00000639073.1">
    <property type="protein sequence ID" value="ENSP00000491332.1"/>
    <property type="gene ID" value="ENSG00000283776.1"/>
</dbReference>
<dbReference type="GeneID" id="112488747"/>
<dbReference type="MANE-Select" id="ENST00000639073.1">
    <property type="protein sequence ID" value="ENSP00000491332.1"/>
    <property type="RefSeq nucleotide sequence ID" value="NM_001401695.1"/>
    <property type="RefSeq protein sequence ID" value="NP_001388624.1"/>
</dbReference>
<dbReference type="AGR" id="HGNC:53856"/>
<dbReference type="GeneCards" id="TAF11L13"/>
<dbReference type="HGNC" id="HGNC:53856">
    <property type="gene designation" value="TAF11L13"/>
</dbReference>
<dbReference type="HPA" id="ENSG00000283776">
    <property type="expression patterns" value="Not detected"/>
</dbReference>
<dbReference type="VEuPathDB" id="HostDB:ENSG00000283776"/>
<dbReference type="GeneTree" id="ENSGT00390000013228"/>
<dbReference type="InParanoid" id="A0A1W2PPH5"/>
<dbReference type="OMA" id="RDYRSHF"/>
<dbReference type="OrthoDB" id="9532091at2759"/>
<dbReference type="PAN-GO" id="A0A1W2PPH5">
    <property type="GO annotations" value="3 GO annotations based on evolutionary models"/>
</dbReference>
<dbReference type="PRO" id="PR:A0A1W2PPH5"/>
<dbReference type="Proteomes" id="UP000005640">
    <property type="component" value="Chromosome 5"/>
</dbReference>
<dbReference type="RNAct" id="A0A1W2PPH5">
    <property type="molecule type" value="protein"/>
</dbReference>
<dbReference type="Bgee" id="ENSG00000283776">
    <property type="expression patterns" value="Expressed in urinary bladder and 2 other cell types or tissues"/>
</dbReference>
<dbReference type="GO" id="GO:0005669">
    <property type="term" value="C:transcription factor TFIID complex"/>
    <property type="evidence" value="ECO:0000318"/>
    <property type="project" value="GO_Central"/>
</dbReference>
<dbReference type="GO" id="GO:0046982">
    <property type="term" value="F:protein heterodimerization activity"/>
    <property type="evidence" value="ECO:0007669"/>
    <property type="project" value="InterPro"/>
</dbReference>
<dbReference type="GO" id="GO:0051123">
    <property type="term" value="P:RNA polymerase II preinitiation complex assembly"/>
    <property type="evidence" value="ECO:0000318"/>
    <property type="project" value="GO_Central"/>
</dbReference>
<dbReference type="CDD" id="cd08048">
    <property type="entry name" value="HFD_TAF11"/>
    <property type="match status" value="1"/>
</dbReference>
<dbReference type="FunFam" id="1.10.20.10:FF:000025">
    <property type="entry name" value="Transcription initiation factor TFIID subunit 11"/>
    <property type="match status" value="1"/>
</dbReference>
<dbReference type="Gene3D" id="1.10.20.10">
    <property type="entry name" value="Histone, subunit A"/>
    <property type="match status" value="1"/>
</dbReference>
<dbReference type="InterPro" id="IPR009072">
    <property type="entry name" value="Histone-fold"/>
</dbReference>
<dbReference type="InterPro" id="IPR045127">
    <property type="entry name" value="TAF11-like"/>
</dbReference>
<dbReference type="InterPro" id="IPR006809">
    <property type="entry name" value="TAFII28_dom"/>
</dbReference>
<dbReference type="PANTHER" id="PTHR13218:SF18">
    <property type="entry name" value="TATA-BOX-BINDING PROTEIN-ASSOCIATED FACTOR 11-LIKE PROTEIN 10-RELATED"/>
    <property type="match status" value="1"/>
</dbReference>
<dbReference type="PANTHER" id="PTHR13218">
    <property type="entry name" value="TRANSCRIPTION INITIATION FACTOR TFIID SUBUNIT 11-RELATED"/>
    <property type="match status" value="1"/>
</dbReference>
<dbReference type="Pfam" id="PF04719">
    <property type="entry name" value="TAFII28"/>
    <property type="match status" value="1"/>
</dbReference>
<dbReference type="SUPFAM" id="SSF47113">
    <property type="entry name" value="Histone-fold"/>
    <property type="match status" value="1"/>
</dbReference>
<sequence>METGRQTGVSAEMLAMPRGLKGSKKDGIPEDLDGNLEEPRDQEGELRSEDVMDLTEGDSEASASAPPAAKRRKTHTKRKKERKPTVDAEEAQRMTTLLSAMSEEQLSRYEVCRRSAFPRARIAGLMRSITGSSVSENAAIAMAGIAKVFVGEVVEEALDMCEMWGETPPLQPKHLREAVHRLKPKGLFPNSNYKRVMF</sequence>
<feature type="chain" id="PRO_0000456153" description="TATA-box-binding protein-associated factor 11-like protein 13">
    <location>
        <begin position="1"/>
        <end position="198"/>
    </location>
</feature>
<feature type="region of interest" description="Disordered" evidence="1">
    <location>
        <begin position="1"/>
        <end position="90"/>
    </location>
</feature>
<feature type="compositionally biased region" description="Basic and acidic residues" evidence="1">
    <location>
        <begin position="37"/>
        <end position="50"/>
    </location>
</feature>
<feature type="compositionally biased region" description="Basic residues" evidence="1">
    <location>
        <begin position="69"/>
        <end position="82"/>
    </location>
</feature>
<accession>A0A1W2PPH5</accession>
<keyword id="KW-1185">Reference proteome</keyword>
<name>TFLM_HUMAN</name>
<gene>
    <name evidence="4" type="primary">TAF11L13</name>
</gene>
<protein>
    <recommendedName>
        <fullName evidence="3">TATA-box-binding protein-associated factor 11-like protein 13</fullName>
    </recommendedName>
</protein>
<comment type="tissue specificity">
    <text evidence="2">Expressed in fetal brain and testis.</text>
</comment>
<comment type="similarity">
    <text evidence="3">Belongs to the TAF11 family.</text>
</comment>
<evidence type="ECO:0000256" key="1">
    <source>
        <dbReference type="SAM" id="MobiDB-lite"/>
    </source>
</evidence>
<evidence type="ECO:0000269" key="2">
    <source>
    </source>
</evidence>
<evidence type="ECO:0000305" key="3"/>
<evidence type="ECO:0000312" key="4">
    <source>
        <dbReference type="HGNC" id="HGNC:53856"/>
    </source>
</evidence>
<proteinExistence type="evidence at transcript level"/>